<reference key="1">
    <citation type="journal article" date="1995" name="Oncogene">
        <title>The yeast homologue YTIS11, of the mammalian TIS11 gene family is a non-essential, glucose repressible gene.</title>
        <authorList>
            <person name="Ma Q."/>
            <person name="Herschman H.R."/>
        </authorList>
    </citation>
    <scope>NUCLEOTIDE SEQUENCE [GENOMIC DNA]</scope>
</reference>
<reference key="2">
    <citation type="journal article" date="1996" name="Gene">
        <title>Cloning and characterization of two yeast genes encoding members of the CCCH class of zinc finger proteins: zinc finger-mediated impairment of cell growth.</title>
        <authorList>
            <person name="Thompson M.J."/>
            <person name="Lai W.S."/>
            <person name="Taylor G.A."/>
            <person name="Blackshear P.J."/>
        </authorList>
    </citation>
    <scope>NUCLEOTIDE SEQUENCE [GENOMIC DNA]</scope>
</reference>
<reference key="3">
    <citation type="journal article" date="1997" name="Nature">
        <title>The nucleotide sequence of Saccharomyces cerevisiae chromosome XII.</title>
        <authorList>
            <person name="Johnston M."/>
            <person name="Hillier L.W."/>
            <person name="Riles L."/>
            <person name="Albermann K."/>
            <person name="Andre B."/>
            <person name="Ansorge W."/>
            <person name="Benes V."/>
            <person name="Brueckner M."/>
            <person name="Delius H."/>
            <person name="Dubois E."/>
            <person name="Duesterhoeft A."/>
            <person name="Entian K.-D."/>
            <person name="Floeth M."/>
            <person name="Goffeau A."/>
            <person name="Hebling U."/>
            <person name="Heumann K."/>
            <person name="Heuss-Neitzel D."/>
            <person name="Hilbert H."/>
            <person name="Hilger F."/>
            <person name="Kleine K."/>
            <person name="Koetter P."/>
            <person name="Louis E.J."/>
            <person name="Messenguy F."/>
            <person name="Mewes H.-W."/>
            <person name="Miosga T."/>
            <person name="Moestl D."/>
            <person name="Mueller-Auer S."/>
            <person name="Nentwich U."/>
            <person name="Obermaier B."/>
            <person name="Piravandi E."/>
            <person name="Pohl T.M."/>
            <person name="Portetelle D."/>
            <person name="Purnelle B."/>
            <person name="Rechmann S."/>
            <person name="Rieger M."/>
            <person name="Rinke M."/>
            <person name="Rose M."/>
            <person name="Scharfe M."/>
            <person name="Scherens B."/>
            <person name="Scholler P."/>
            <person name="Schwager C."/>
            <person name="Schwarz S."/>
            <person name="Underwood A.P."/>
            <person name="Urrestarazu L.A."/>
            <person name="Vandenbol M."/>
            <person name="Verhasselt P."/>
            <person name="Vierendeels F."/>
            <person name="Voet M."/>
            <person name="Volckaert G."/>
            <person name="Voss H."/>
            <person name="Wambutt R."/>
            <person name="Wedler E."/>
            <person name="Wedler H."/>
            <person name="Zimmermann F.K."/>
            <person name="Zollner A."/>
            <person name="Hani J."/>
            <person name="Hoheisel J.D."/>
        </authorList>
    </citation>
    <scope>NUCLEOTIDE SEQUENCE [LARGE SCALE GENOMIC DNA]</scope>
    <source>
        <strain>ATCC 204508 / S288c</strain>
    </source>
</reference>
<reference key="4">
    <citation type="journal article" date="2014" name="G3 (Bethesda)">
        <title>The reference genome sequence of Saccharomyces cerevisiae: Then and now.</title>
        <authorList>
            <person name="Engel S.R."/>
            <person name="Dietrich F.S."/>
            <person name="Fisk D.G."/>
            <person name="Binkley G."/>
            <person name="Balakrishnan R."/>
            <person name="Costanzo M.C."/>
            <person name="Dwight S.S."/>
            <person name="Hitz B.C."/>
            <person name="Karra K."/>
            <person name="Nash R.S."/>
            <person name="Weng S."/>
            <person name="Wong E.D."/>
            <person name="Lloyd P."/>
            <person name="Skrzypek M.S."/>
            <person name="Miyasato S.R."/>
            <person name="Simison M."/>
            <person name="Cherry J.M."/>
        </authorList>
    </citation>
    <scope>GENOME REANNOTATION</scope>
    <source>
        <strain>ATCC 204508 / S288c</strain>
    </source>
</reference>
<reference key="5">
    <citation type="journal article" date="2007" name="Genome Res.">
        <title>Approaching a complete repository of sequence-verified protein-encoding clones for Saccharomyces cerevisiae.</title>
        <authorList>
            <person name="Hu Y."/>
            <person name="Rolfs A."/>
            <person name="Bhullar B."/>
            <person name="Murthy T.V.S."/>
            <person name="Zhu C."/>
            <person name="Berger M.F."/>
            <person name="Camargo A.A."/>
            <person name="Kelley F."/>
            <person name="McCarron S."/>
            <person name="Jepson D."/>
            <person name="Richardson A."/>
            <person name="Raphael J."/>
            <person name="Moreira D."/>
            <person name="Taycher E."/>
            <person name="Zuo D."/>
            <person name="Mohr S."/>
            <person name="Kane M.F."/>
            <person name="Williamson J."/>
            <person name="Simpson A.J.G."/>
            <person name="Bulyk M.L."/>
            <person name="Harlow E."/>
            <person name="Marsischky G."/>
            <person name="Kolodner R.D."/>
            <person name="LaBaer J."/>
        </authorList>
    </citation>
    <scope>NUCLEOTIDE SEQUENCE [GENOMIC DNA]</scope>
    <source>
        <strain>ATCC 204508 / S288c</strain>
    </source>
</reference>
<reference key="6">
    <citation type="journal article" date="2003" name="Nature">
        <title>Global analysis of protein localization in budding yeast.</title>
        <authorList>
            <person name="Huh W.-K."/>
            <person name="Falvo J.V."/>
            <person name="Gerke L.C."/>
            <person name="Carroll A.S."/>
            <person name="Howson R.W."/>
            <person name="Weissman J.S."/>
            <person name="O'Shea E.K."/>
        </authorList>
    </citation>
    <scope>SUBCELLULAR LOCATION [LARGE SCALE ANALYSIS]</scope>
</reference>
<reference key="7">
    <citation type="journal article" date="2005" name="Cell">
        <title>Coordinated remodeling of cellular metabolism during iron deficiency through targeted mRNA degradation.</title>
        <authorList>
            <person name="Puig S."/>
            <person name="Askeland E."/>
            <person name="Thiele D.J."/>
        </authorList>
    </citation>
    <scope>FUNCTION</scope>
    <scope>INDUCTION</scope>
    <scope>MUTAGENESIS OF CYS-190 AND CYS-213</scope>
    <scope>MRNA-BINDING</scope>
</reference>
<reference key="8">
    <citation type="journal article" date="2008" name="Cell Metab.">
        <title>Cooperation of two mRNA-binding proteins drives metabolic adaptation to iron deficiency.</title>
        <authorList>
            <person name="Puig S."/>
            <person name="Vergara S.V."/>
            <person name="Thiele D.J."/>
        </authorList>
    </citation>
    <scope>FUNCTION</scope>
</reference>
<reference key="9">
    <citation type="journal article" date="2008" name="EMBO J.">
        <title>Regulation of ARE transcript 3' end processing by the yeast Cth2 mRNA decay factor.</title>
        <authorList>
            <person name="Prouteau M."/>
            <person name="Daugeron M.-C."/>
            <person name="Seraphin B."/>
        </authorList>
    </citation>
    <scope>FUNCTION</scope>
    <scope>SUBCELLULAR LOCATION</scope>
</reference>
<reference key="10">
    <citation type="journal article" date="2008" name="J. Biol. Chem.">
        <title>The Cth2 ARE-binding protein recruits the Dhh1 helicase to promote the decay of succinate dehydrogenase SDH4 mRNA in response to iron deficiency.</title>
        <authorList>
            <person name="Pedro-Segura E."/>
            <person name="Vergara S.V."/>
            <person name="Rodriguez-Navarro S."/>
            <person name="Parker R."/>
            <person name="Thiele D.J."/>
            <person name="Puig S."/>
        </authorList>
    </citation>
    <scope>FUNCTION</scope>
    <scope>INTERACTION WITH DHH1</scope>
    <scope>SUBCELLULAR LOCATION</scope>
</reference>
<organism>
    <name type="scientific">Saccharomyces cerevisiae (strain ATCC 204508 / S288c)</name>
    <name type="common">Baker's yeast</name>
    <dbReference type="NCBI Taxonomy" id="559292"/>
    <lineage>
        <taxon>Eukaryota</taxon>
        <taxon>Fungi</taxon>
        <taxon>Dikarya</taxon>
        <taxon>Ascomycota</taxon>
        <taxon>Saccharomycotina</taxon>
        <taxon>Saccharomycetes</taxon>
        <taxon>Saccharomycetales</taxon>
        <taxon>Saccharomycetaceae</taxon>
        <taxon>Saccharomyces</taxon>
    </lineage>
</organism>
<gene>
    <name type="primary">TIS11</name>
    <name type="synonym">CTH2</name>
    <name type="ordered locus">YLR136C</name>
    <name type="ORF">L3143</name>
    <name type="ORF">L9606.12</name>
</gene>
<sequence>MWAQLSYTRPESQKTDLTSLFSTDQEQNPLNDYQYQINIRELEEYYNKTILNEDNIQETSSEISSAVSFSPPKNTNAIQPGLLYDPQLMNPFLPSAHLNSTAPTTFKKKLEVQINPDYVPKSSQLPLTSQNLQQLSQQKPKNDASFSSEKESSAQPKVKSQVQETPKQLYKTELCESFTLKGSCPYGSKCQFAHGLGELKVKKSCKNFRTKPCVNWEKLGYCPYGRRCCFKHGDDNDIAVYVKAGTYCNVSSTSKQSDEKRSNGRGSAKKKNLNVKVKALQRMTW</sequence>
<accession>P47977</accession>
<accession>D6VYD1</accession>
<evidence type="ECO:0000255" key="1">
    <source>
        <dbReference type="PROSITE-ProRule" id="PRU00723"/>
    </source>
</evidence>
<evidence type="ECO:0000256" key="2">
    <source>
        <dbReference type="SAM" id="MobiDB-lite"/>
    </source>
</evidence>
<evidence type="ECO:0000269" key="3">
    <source>
    </source>
</evidence>
<evidence type="ECO:0000269" key="4">
    <source>
    </source>
</evidence>
<evidence type="ECO:0000269" key="5">
    <source>
    </source>
</evidence>
<evidence type="ECO:0000269" key="6">
    <source>
    </source>
</evidence>
<dbReference type="EMBL" id="S76619">
    <property type="protein sequence ID" value="AAB33266.1"/>
    <property type="molecule type" value="Genomic_DNA"/>
</dbReference>
<dbReference type="EMBL" id="L42134">
    <property type="protein sequence ID" value="AAB39898.1"/>
    <property type="molecule type" value="Genomic_DNA"/>
</dbReference>
<dbReference type="EMBL" id="X91258">
    <property type="protein sequence ID" value="CAA62651.1"/>
    <property type="molecule type" value="Genomic_DNA"/>
</dbReference>
<dbReference type="EMBL" id="Z73308">
    <property type="protein sequence ID" value="CAA97707.1"/>
    <property type="molecule type" value="Genomic_DNA"/>
</dbReference>
<dbReference type="EMBL" id="U53881">
    <property type="protein sequence ID" value="AAB82400.1"/>
    <property type="molecule type" value="Genomic_DNA"/>
</dbReference>
<dbReference type="EMBL" id="AY558210">
    <property type="protein sequence ID" value="AAS56536.1"/>
    <property type="molecule type" value="Genomic_DNA"/>
</dbReference>
<dbReference type="EMBL" id="BK006945">
    <property type="protein sequence ID" value="DAA09447.1"/>
    <property type="molecule type" value="Genomic_DNA"/>
</dbReference>
<dbReference type="PIR" id="S59328">
    <property type="entry name" value="S59328"/>
</dbReference>
<dbReference type="RefSeq" id="NP_013237.1">
    <property type="nucleotide sequence ID" value="NM_001182023.1"/>
</dbReference>
<dbReference type="SMR" id="P47977"/>
<dbReference type="BioGRID" id="31405">
    <property type="interactions" value="67"/>
</dbReference>
<dbReference type="DIP" id="DIP-5614N"/>
<dbReference type="FunCoup" id="P47977">
    <property type="interactions" value="114"/>
</dbReference>
<dbReference type="IntAct" id="P47977">
    <property type="interactions" value="4"/>
</dbReference>
<dbReference type="STRING" id="4932.YLR136C"/>
<dbReference type="iPTMnet" id="P47977"/>
<dbReference type="PaxDb" id="4932-YLR136C"/>
<dbReference type="PeptideAtlas" id="P47977"/>
<dbReference type="EnsemblFungi" id="YLR136C_mRNA">
    <property type="protein sequence ID" value="YLR136C"/>
    <property type="gene ID" value="YLR136C"/>
</dbReference>
<dbReference type="GeneID" id="850827"/>
<dbReference type="KEGG" id="sce:YLR136C"/>
<dbReference type="AGR" id="SGD:S000004126"/>
<dbReference type="SGD" id="S000004126">
    <property type="gene designation" value="TIS11"/>
</dbReference>
<dbReference type="VEuPathDB" id="FungiDB:YLR136C"/>
<dbReference type="eggNOG" id="KOG1677">
    <property type="taxonomic scope" value="Eukaryota"/>
</dbReference>
<dbReference type="GeneTree" id="ENSGT00940000170800"/>
<dbReference type="HOGENOM" id="CLU_060370_0_0_1"/>
<dbReference type="InParanoid" id="P47977"/>
<dbReference type="OMA" id="TELCESX"/>
<dbReference type="OrthoDB" id="410307at2759"/>
<dbReference type="BioCyc" id="YEAST:G3O-32276-MONOMER"/>
<dbReference type="Reactome" id="R-SCE-450385">
    <property type="pathway name" value="Butyrate Response Factor 1 (BRF1) binds and destabilizes mRNA"/>
</dbReference>
<dbReference type="Reactome" id="R-SCE-450513">
    <property type="pathway name" value="Tristetraprolin (TTP, ZFP36) binds and destabilizes mRNA"/>
</dbReference>
<dbReference type="BioGRID-ORCS" id="850827">
    <property type="hits" value="3 hits in 10 CRISPR screens"/>
</dbReference>
<dbReference type="CD-CODE" id="A777E0F8">
    <property type="entry name" value="P-body"/>
</dbReference>
<dbReference type="PRO" id="PR:P47977"/>
<dbReference type="Proteomes" id="UP000002311">
    <property type="component" value="Chromosome XII"/>
</dbReference>
<dbReference type="RNAct" id="P47977">
    <property type="molecule type" value="protein"/>
</dbReference>
<dbReference type="GO" id="GO:0005737">
    <property type="term" value="C:cytoplasm"/>
    <property type="evidence" value="ECO:0000314"/>
    <property type="project" value="SGD"/>
</dbReference>
<dbReference type="GO" id="GO:0005739">
    <property type="term" value="C:mitochondrion"/>
    <property type="evidence" value="ECO:0000314"/>
    <property type="project" value="SGD"/>
</dbReference>
<dbReference type="GO" id="GO:0005634">
    <property type="term" value="C:nucleus"/>
    <property type="evidence" value="ECO:0000314"/>
    <property type="project" value="SGD"/>
</dbReference>
<dbReference type="GO" id="GO:0000932">
    <property type="term" value="C:P-body"/>
    <property type="evidence" value="ECO:0007669"/>
    <property type="project" value="UniProtKB-SubCell"/>
</dbReference>
<dbReference type="GO" id="GO:0003729">
    <property type="term" value="F:mRNA binding"/>
    <property type="evidence" value="ECO:0000314"/>
    <property type="project" value="SGD"/>
</dbReference>
<dbReference type="GO" id="GO:0030371">
    <property type="term" value="F:translation repressor activity"/>
    <property type="evidence" value="ECO:0000314"/>
    <property type="project" value="SGD"/>
</dbReference>
<dbReference type="GO" id="GO:0008270">
    <property type="term" value="F:zinc ion binding"/>
    <property type="evidence" value="ECO:0007669"/>
    <property type="project" value="UniProtKB-KW"/>
</dbReference>
<dbReference type="GO" id="GO:0015990">
    <property type="term" value="P:electron transport coupled proton transport"/>
    <property type="evidence" value="ECO:0000314"/>
    <property type="project" value="SGD"/>
</dbReference>
<dbReference type="GO" id="GO:0006879">
    <property type="term" value="P:intracellular iron ion homeostasis"/>
    <property type="evidence" value="ECO:0000315"/>
    <property type="project" value="SGD"/>
</dbReference>
<dbReference type="GO" id="GO:2000766">
    <property type="term" value="P:negative regulation of cytoplasmic translation"/>
    <property type="evidence" value="ECO:0000314"/>
    <property type="project" value="SGD"/>
</dbReference>
<dbReference type="GO" id="GO:0000956">
    <property type="term" value="P:nuclear-transcribed mRNA catabolic process"/>
    <property type="evidence" value="ECO:0000315"/>
    <property type="project" value="SGD"/>
</dbReference>
<dbReference type="GO" id="GO:1990641">
    <property type="term" value="P:response to iron ion starvation"/>
    <property type="evidence" value="ECO:0000314"/>
    <property type="project" value="SGD"/>
</dbReference>
<dbReference type="FunFam" id="4.10.1000.10:FF:000001">
    <property type="entry name" value="zinc finger CCCH domain-containing protein 15-like"/>
    <property type="match status" value="1"/>
</dbReference>
<dbReference type="FunFam" id="4.10.1000.10:FF:000018">
    <property type="entry name" value="Zinc finger protein"/>
    <property type="match status" value="1"/>
</dbReference>
<dbReference type="Gene3D" id="4.10.1000.10">
    <property type="entry name" value="Zinc finger, CCCH-type"/>
    <property type="match status" value="2"/>
</dbReference>
<dbReference type="InterPro" id="IPR045877">
    <property type="entry name" value="ZFP36-like"/>
</dbReference>
<dbReference type="InterPro" id="IPR000571">
    <property type="entry name" value="Znf_CCCH"/>
</dbReference>
<dbReference type="InterPro" id="IPR036855">
    <property type="entry name" value="Znf_CCCH_sf"/>
</dbReference>
<dbReference type="PANTHER" id="PTHR12547">
    <property type="entry name" value="CCCH ZINC FINGER/TIS11-RELATED"/>
    <property type="match status" value="1"/>
</dbReference>
<dbReference type="PANTHER" id="PTHR12547:SF18">
    <property type="entry name" value="PROTEIN TIS11"/>
    <property type="match status" value="1"/>
</dbReference>
<dbReference type="Pfam" id="PF00642">
    <property type="entry name" value="zf-CCCH"/>
    <property type="match status" value="2"/>
</dbReference>
<dbReference type="SMART" id="SM00356">
    <property type="entry name" value="ZnF_C3H1"/>
    <property type="match status" value="2"/>
</dbReference>
<dbReference type="SUPFAM" id="SSF90229">
    <property type="entry name" value="CCCH zinc finger"/>
    <property type="match status" value="2"/>
</dbReference>
<dbReference type="PROSITE" id="PS50103">
    <property type="entry name" value="ZF_C3H1"/>
    <property type="match status" value="2"/>
</dbReference>
<feature type="chain" id="PRO_0000089174" description="mRNA decay factor CTH2">
    <location>
        <begin position="1"/>
        <end position="285"/>
    </location>
</feature>
<feature type="zinc finger region" description="C3H1-type 1" evidence="1">
    <location>
        <begin position="169"/>
        <end position="197"/>
    </location>
</feature>
<feature type="zinc finger region" description="C3H1-type 2" evidence="1">
    <location>
        <begin position="207"/>
        <end position="235"/>
    </location>
</feature>
<feature type="region of interest" description="Required for mRNA decay activity">
    <location>
        <begin position="37"/>
        <end position="55"/>
    </location>
</feature>
<feature type="region of interest" description="Disordered" evidence="2">
    <location>
        <begin position="132"/>
        <end position="164"/>
    </location>
</feature>
<feature type="region of interest" description="Disordered" evidence="2">
    <location>
        <begin position="252"/>
        <end position="271"/>
    </location>
</feature>
<feature type="compositionally biased region" description="Polar residues" evidence="2">
    <location>
        <begin position="153"/>
        <end position="164"/>
    </location>
</feature>
<feature type="mutagenesis site" description="Abolishes mRNA binding." evidence="3">
    <original>C</original>
    <variation>A</variation>
    <variation>R</variation>
    <location>
        <position position="190"/>
    </location>
</feature>
<feature type="mutagenesis site" description="Abolishes mRNA binding." evidence="3">
    <original>C</original>
    <variation>A</variation>
    <variation>R</variation>
    <location>
        <position position="213"/>
    </location>
</feature>
<protein>
    <recommendedName>
        <fullName>mRNA decay factor CTH2</fullName>
    </recommendedName>
    <alternativeName>
        <fullName>Cysteine-three-histidine protein 2</fullName>
    </alternativeName>
    <alternativeName>
        <fullName>Protein TIS11 homolog</fullName>
    </alternativeName>
    <alternativeName>
        <fullName>Protein YTIS11</fullName>
    </alternativeName>
    <alternativeName>
        <fullName>TPA-induced sequence protein 11</fullName>
    </alternativeName>
</protein>
<keyword id="KW-0963">Cytoplasm</keyword>
<keyword id="KW-0479">Metal-binding</keyword>
<keyword id="KW-0539">Nucleus</keyword>
<keyword id="KW-1185">Reference proteome</keyword>
<keyword id="KW-0677">Repeat</keyword>
<keyword id="KW-0694">RNA-binding</keyword>
<keyword id="KW-0862">Zinc</keyword>
<keyword id="KW-0863">Zinc-finger</keyword>
<name>CTH2_YEAST</name>
<proteinExistence type="evidence at protein level"/>
<comment type="function">
    <text evidence="3 4 5 6">Binds to specific AU-rich elements (ARE) in the 3'-untranslated region of target mRNAs and promotes their degradation. In response to iron deficiency, promotes the decay of many mRNAs encoding proteins involved in iron-dependent pathways. Recruits the DHH1 helicase to the SDH4 mRNA and promotes SDH4 mRNA decay. Also destabilizes target mRNA by modulating 3'-end processing, creating extended transcripts that are prone for degradation.</text>
</comment>
<comment type="subunit">
    <text evidence="5">Interacts with DHH1.</text>
</comment>
<comment type="subcellular location">
    <subcellularLocation>
        <location evidence="6">Nucleus</location>
    </subcellularLocation>
    <subcellularLocation>
        <location evidence="5">Cytoplasm</location>
        <location evidence="5">P-body</location>
    </subcellularLocation>
</comment>
<comment type="induction">
    <text evidence="3">By transcription factors AFT1 and AFT2 in response to iron deficiency.</text>
</comment>